<protein>
    <recommendedName>
        <fullName>Transmembrane protein 174</fullName>
    </recommendedName>
</protein>
<gene>
    <name type="primary">TMEM174</name>
</gene>
<keyword id="KW-1003">Cell membrane</keyword>
<keyword id="KW-0256">Endoplasmic reticulum</keyword>
<keyword id="KW-0472">Membrane</keyword>
<keyword id="KW-1185">Reference proteome</keyword>
<keyword id="KW-0812">Transmembrane</keyword>
<keyword id="KW-1133">Transmembrane helix</keyword>
<name>TM174_PONAB</name>
<accession>Q5R8E0</accession>
<proteinExistence type="evidence at transcript level"/>
<comment type="function">
    <text evidence="2">Regulator of plasma phosphate homeostasis. Decreases serum inorganic phosphate (Pi) uptake by regulating the sodium-phosphate cotransporter SLC34A1 trafficking by PTH and FGF23 in the kidney.</text>
</comment>
<comment type="subunit">
    <text evidence="2">Interacts with SLC34A1; regulates SLC34A1 internalization by PTH and FGF23.</text>
</comment>
<comment type="subcellular location">
    <subcellularLocation>
        <location evidence="1">Endoplasmic reticulum membrane</location>
        <topology evidence="3">Multi-pass membrane protein</topology>
    </subcellularLocation>
    <subcellularLocation>
        <location evidence="1">Apical cell membrane</location>
        <topology evidence="3">Multi-pass membrane protein</topology>
    </subcellularLocation>
</comment>
<comment type="caution">
    <text evidence="1 4">A previous study found the localization of TMEM174 in the endoplasmic reticulum (By similarity). A more recent study detected TMEM174 in cell membrane (By similarity). The difference between these two studies could be due to the use of different cell lines.</text>
</comment>
<reference key="1">
    <citation type="submission" date="2004-11" db="EMBL/GenBank/DDBJ databases">
        <authorList>
            <consortium name="The German cDNA consortium"/>
        </authorList>
    </citation>
    <scope>NUCLEOTIDE SEQUENCE [LARGE SCALE MRNA]</scope>
    <source>
        <tissue>Kidney</tissue>
    </source>
</reference>
<organism>
    <name type="scientific">Pongo abelii</name>
    <name type="common">Sumatran orangutan</name>
    <name type="synonym">Pongo pygmaeus abelii</name>
    <dbReference type="NCBI Taxonomy" id="9601"/>
    <lineage>
        <taxon>Eukaryota</taxon>
        <taxon>Metazoa</taxon>
        <taxon>Chordata</taxon>
        <taxon>Craniata</taxon>
        <taxon>Vertebrata</taxon>
        <taxon>Euteleostomi</taxon>
        <taxon>Mammalia</taxon>
        <taxon>Eutheria</taxon>
        <taxon>Euarchontoglires</taxon>
        <taxon>Primates</taxon>
        <taxon>Haplorrhini</taxon>
        <taxon>Catarrhini</taxon>
        <taxon>Hominidae</taxon>
        <taxon>Pongo</taxon>
    </lineage>
</organism>
<feature type="chain" id="PRO_0000282579" description="Transmembrane protein 174">
    <location>
        <begin position="1"/>
        <end position="243"/>
    </location>
</feature>
<feature type="transmembrane region" description="Helical" evidence="3">
    <location>
        <begin position="40"/>
        <end position="60"/>
    </location>
</feature>
<feature type="transmembrane region" description="Helical" evidence="3">
    <location>
        <begin position="73"/>
        <end position="93"/>
    </location>
</feature>
<dbReference type="EMBL" id="CR859813">
    <property type="protein sequence ID" value="CAH91970.1"/>
    <property type="molecule type" value="mRNA"/>
</dbReference>
<dbReference type="RefSeq" id="NP_001126141.1">
    <property type="nucleotide sequence ID" value="NM_001132669.2"/>
</dbReference>
<dbReference type="FunCoup" id="Q5R8E0">
    <property type="interactions" value="13"/>
</dbReference>
<dbReference type="STRING" id="9601.ENSPPYP00000017379"/>
<dbReference type="Ensembl" id="ENSPPYT00000018084.3">
    <property type="protein sequence ID" value="ENSPPYP00000017379.2"/>
    <property type="gene ID" value="ENSPPYG00000015548.3"/>
</dbReference>
<dbReference type="GeneID" id="100173099"/>
<dbReference type="KEGG" id="pon:100173099"/>
<dbReference type="CTD" id="134288"/>
<dbReference type="eggNOG" id="ENOG502RZ98">
    <property type="taxonomic scope" value="Eukaryota"/>
</dbReference>
<dbReference type="GeneTree" id="ENSGT00390000004161"/>
<dbReference type="HOGENOM" id="CLU_099888_0_0_1"/>
<dbReference type="InParanoid" id="Q5R8E0"/>
<dbReference type="OMA" id="YYTIYPP"/>
<dbReference type="OrthoDB" id="9931655at2759"/>
<dbReference type="TreeFam" id="TF335512"/>
<dbReference type="Proteomes" id="UP000001595">
    <property type="component" value="Chromosome 5"/>
</dbReference>
<dbReference type="GO" id="GO:0016324">
    <property type="term" value="C:apical plasma membrane"/>
    <property type="evidence" value="ECO:0000250"/>
    <property type="project" value="UniProtKB"/>
</dbReference>
<dbReference type="GO" id="GO:0005789">
    <property type="term" value="C:endoplasmic reticulum membrane"/>
    <property type="evidence" value="ECO:0007669"/>
    <property type="project" value="UniProtKB-SubCell"/>
</dbReference>
<dbReference type="GO" id="GO:0055062">
    <property type="term" value="P:phosphate ion homeostasis"/>
    <property type="evidence" value="ECO:0000250"/>
    <property type="project" value="UniProtKB"/>
</dbReference>
<dbReference type="InterPro" id="IPR027835">
    <property type="entry name" value="TMEM174"/>
</dbReference>
<dbReference type="PANTHER" id="PTHR31020">
    <property type="entry name" value="TRANSMEMBRANE PROTEIN 174"/>
    <property type="match status" value="1"/>
</dbReference>
<dbReference type="PANTHER" id="PTHR31020:SF1">
    <property type="entry name" value="TRANSMEMBRANE PROTEIN 174"/>
    <property type="match status" value="1"/>
</dbReference>
<dbReference type="Pfam" id="PF15029">
    <property type="entry name" value="TMEM174"/>
    <property type="match status" value="1"/>
</dbReference>
<evidence type="ECO:0000250" key="1">
    <source>
        <dbReference type="UniProtKB" id="Q8WUU8"/>
    </source>
</evidence>
<evidence type="ECO:0000250" key="2">
    <source>
        <dbReference type="UniProtKB" id="Q9DCX7"/>
    </source>
</evidence>
<evidence type="ECO:0000255" key="3"/>
<evidence type="ECO:0000305" key="4"/>
<sequence length="243" mass="26217">MEQGSGRLEDFPVNVFSVTPYTPSTADIQVSDDDKAGATLLFSGIFLGLVGITFTVMGWIKYQGVSHFEWTQLLGPVLLSVGVTFILIAVCKFKMLSCQLCKESEERVLDSEQTPGGPSFVFTGINQPITFHGATVVQYIPPPYGSPEPVGINTSYLQSVVSPCSLITSGGAAAAMSSPSQYYTIYPQDNSAFVVDEGCPSFADGGNHRPNPDADQLEETQLEEEACACFSPPPYEEIYSLPR</sequence>